<sequence>MLQVYLVRHGETQWNAERRIQGQSDSPLTAKGEQQAMQVATRAKELGITHIISSDLGRTRRTAEIIAQACGCDIIFDSRLRELNMGVLEKRHIDSLTEEEENWRRQLVNGTVDGRIPEGESMQELSDRVNAALESCRDLPQGSRPLLVSHGIALGCLVSTILGLPAWAERRLRLRNCSISRVDYQESLWLASGWVVETAGDISHLDAPALDELQR</sequence>
<proteinExistence type="inferred from homology"/>
<protein>
    <recommendedName>
        <fullName evidence="1">Probable phosphoglycerate mutase GpmB</fullName>
        <ecNumber evidence="1">5.4.2.-</ecNumber>
    </recommendedName>
    <alternativeName>
        <fullName evidence="1">PGAM</fullName>
    </alternativeName>
    <alternativeName>
        <fullName evidence="1">Phosphoglyceromutase</fullName>
    </alternativeName>
</protein>
<accession>B5Z4S7</accession>
<organism>
    <name type="scientific">Escherichia coli O157:H7 (strain EC4115 / EHEC)</name>
    <dbReference type="NCBI Taxonomy" id="444450"/>
    <lineage>
        <taxon>Bacteria</taxon>
        <taxon>Pseudomonadati</taxon>
        <taxon>Pseudomonadota</taxon>
        <taxon>Gammaproteobacteria</taxon>
        <taxon>Enterobacterales</taxon>
        <taxon>Enterobacteriaceae</taxon>
        <taxon>Escherichia</taxon>
    </lineage>
</organism>
<name>GPMB_ECO5E</name>
<evidence type="ECO:0000255" key="1">
    <source>
        <dbReference type="HAMAP-Rule" id="MF_01040"/>
    </source>
</evidence>
<keyword id="KW-0324">Glycolysis</keyword>
<keyword id="KW-0413">Isomerase</keyword>
<gene>
    <name evidence="1" type="primary">gpmB</name>
    <name type="ordered locus">ECH74115_5911</name>
</gene>
<comment type="catalytic activity">
    <reaction evidence="1">
        <text>(2R)-2-phosphoglycerate = (2R)-3-phosphoglycerate</text>
        <dbReference type="Rhea" id="RHEA:15901"/>
        <dbReference type="ChEBI" id="CHEBI:58272"/>
        <dbReference type="ChEBI" id="CHEBI:58289"/>
    </reaction>
</comment>
<comment type="pathway">
    <text evidence="1">Carbohydrate degradation; glycolysis; pyruvate from D-glyceraldehyde 3-phosphate: step 3/5.</text>
</comment>
<comment type="similarity">
    <text evidence="1">Belongs to the phosphoglycerate mutase family. GpmB subfamily.</text>
</comment>
<reference key="1">
    <citation type="journal article" date="2011" name="Proc. Natl. Acad. Sci. U.S.A.">
        <title>Genomic anatomy of Escherichia coli O157:H7 outbreaks.</title>
        <authorList>
            <person name="Eppinger M."/>
            <person name="Mammel M.K."/>
            <person name="Leclerc J.E."/>
            <person name="Ravel J."/>
            <person name="Cebula T.A."/>
        </authorList>
    </citation>
    <scope>NUCLEOTIDE SEQUENCE [LARGE SCALE GENOMIC DNA]</scope>
    <source>
        <strain>EC4115 / EHEC</strain>
    </source>
</reference>
<dbReference type="EC" id="5.4.2.-" evidence="1"/>
<dbReference type="EMBL" id="CP001164">
    <property type="protein sequence ID" value="ACI35858.1"/>
    <property type="molecule type" value="Genomic_DNA"/>
</dbReference>
<dbReference type="RefSeq" id="WP_000942344.1">
    <property type="nucleotide sequence ID" value="NC_011353.1"/>
</dbReference>
<dbReference type="SMR" id="B5Z4S7"/>
<dbReference type="GeneID" id="93777450"/>
<dbReference type="KEGG" id="ecf:ECH74115_5911"/>
<dbReference type="HOGENOM" id="CLU_033323_9_5_6"/>
<dbReference type="UniPathway" id="UPA00109">
    <property type="reaction ID" value="UER00186"/>
</dbReference>
<dbReference type="GO" id="GO:0005737">
    <property type="term" value="C:cytoplasm"/>
    <property type="evidence" value="ECO:0007669"/>
    <property type="project" value="TreeGrafter"/>
</dbReference>
<dbReference type="GO" id="GO:0016791">
    <property type="term" value="F:phosphatase activity"/>
    <property type="evidence" value="ECO:0007669"/>
    <property type="project" value="TreeGrafter"/>
</dbReference>
<dbReference type="GO" id="GO:0004619">
    <property type="term" value="F:phosphoglycerate mutase activity"/>
    <property type="evidence" value="ECO:0007669"/>
    <property type="project" value="UniProtKB-UniRule"/>
</dbReference>
<dbReference type="GO" id="GO:0006096">
    <property type="term" value="P:glycolytic process"/>
    <property type="evidence" value="ECO:0007669"/>
    <property type="project" value="UniProtKB-UniRule"/>
</dbReference>
<dbReference type="CDD" id="cd07067">
    <property type="entry name" value="HP_PGM_like"/>
    <property type="match status" value="1"/>
</dbReference>
<dbReference type="Gene3D" id="3.40.50.1240">
    <property type="entry name" value="Phosphoglycerate mutase-like"/>
    <property type="match status" value="1"/>
</dbReference>
<dbReference type="HAMAP" id="MF_01040">
    <property type="entry name" value="PGAM_GpmB"/>
    <property type="match status" value="1"/>
</dbReference>
<dbReference type="InterPro" id="IPR013078">
    <property type="entry name" value="His_Pase_superF_clade-1"/>
</dbReference>
<dbReference type="InterPro" id="IPR029033">
    <property type="entry name" value="His_PPase_superfam"/>
</dbReference>
<dbReference type="InterPro" id="IPR001345">
    <property type="entry name" value="PG/BPGM_mutase_AS"/>
</dbReference>
<dbReference type="InterPro" id="IPR050275">
    <property type="entry name" value="PGM_Phosphatase"/>
</dbReference>
<dbReference type="InterPro" id="IPR023086">
    <property type="entry name" value="Phosphoglycerate_mutase_GpmB"/>
</dbReference>
<dbReference type="NCBIfam" id="NF002901">
    <property type="entry name" value="PRK03482.1"/>
    <property type="match status" value="1"/>
</dbReference>
<dbReference type="PANTHER" id="PTHR48100">
    <property type="entry name" value="BROAD-SPECIFICITY PHOSPHATASE YOR283W-RELATED"/>
    <property type="match status" value="1"/>
</dbReference>
<dbReference type="PANTHER" id="PTHR48100:SF1">
    <property type="entry name" value="HISTIDINE PHOSPHATASE FAMILY PROTEIN-RELATED"/>
    <property type="match status" value="1"/>
</dbReference>
<dbReference type="Pfam" id="PF00300">
    <property type="entry name" value="His_Phos_1"/>
    <property type="match status" value="1"/>
</dbReference>
<dbReference type="SMART" id="SM00855">
    <property type="entry name" value="PGAM"/>
    <property type="match status" value="1"/>
</dbReference>
<dbReference type="SUPFAM" id="SSF53254">
    <property type="entry name" value="Phosphoglycerate mutase-like"/>
    <property type="match status" value="1"/>
</dbReference>
<dbReference type="PROSITE" id="PS00175">
    <property type="entry name" value="PG_MUTASE"/>
    <property type="match status" value="1"/>
</dbReference>
<feature type="chain" id="PRO_1000136000" description="Probable phosphoglycerate mutase GpmB">
    <location>
        <begin position="1"/>
        <end position="215"/>
    </location>
</feature>
<feature type="active site" description="Tele-phosphohistidine intermediate" evidence="1">
    <location>
        <position position="9"/>
    </location>
</feature>
<feature type="active site" description="Proton donor/acceptor" evidence="1">
    <location>
        <position position="82"/>
    </location>
</feature>
<feature type="binding site" evidence="1">
    <location>
        <begin position="8"/>
        <end position="15"/>
    </location>
    <ligand>
        <name>substrate</name>
    </ligand>
</feature>
<feature type="binding site" evidence="1">
    <location>
        <begin position="21"/>
        <end position="22"/>
    </location>
    <ligand>
        <name>substrate</name>
    </ligand>
</feature>
<feature type="binding site" evidence="1">
    <location>
        <position position="58"/>
    </location>
    <ligand>
        <name>substrate</name>
    </ligand>
</feature>
<feature type="binding site" evidence="1">
    <location>
        <position position="60"/>
    </location>
    <ligand>
        <name>substrate</name>
    </ligand>
</feature>
<feature type="binding site" evidence="1">
    <location>
        <begin position="82"/>
        <end position="85"/>
    </location>
    <ligand>
        <name>substrate</name>
    </ligand>
</feature>
<feature type="binding site" evidence="1">
    <location>
        <begin position="104"/>
        <end position="105"/>
    </location>
    <ligand>
        <name>substrate</name>
    </ligand>
</feature>
<feature type="binding site" evidence="1">
    <location>
        <begin position="151"/>
        <end position="152"/>
    </location>
    <ligand>
        <name>substrate</name>
    </ligand>
</feature>
<feature type="site" description="Transition state stabilizer" evidence="1">
    <location>
        <position position="150"/>
    </location>
</feature>